<gene>
    <name type="primary">BHLH28</name>
    <name type="synonym">EN40</name>
    <name type="ordered locus">At5g46830</name>
    <name type="ORF">MZA15.1</name>
</gene>
<feature type="chain" id="PRO_0000358738" description="Transcription factor bHLH28">
    <location>
        <begin position="1"/>
        <end position="511"/>
    </location>
</feature>
<feature type="domain" description="bHLH" evidence="1">
    <location>
        <begin position="339"/>
        <end position="388"/>
    </location>
</feature>
<name>BH028_ARATH</name>
<reference key="1">
    <citation type="journal article" date="2003" name="Mol. Biol. Evol.">
        <title>The basic helix-loop-helix transcription factor family in plants: a genome-wide study of protein structure and functional diversity.</title>
        <authorList>
            <person name="Heim M.A."/>
            <person name="Jakoby M."/>
            <person name="Werber M."/>
            <person name="Martin C."/>
            <person name="Weisshaar B."/>
            <person name="Bailey P.C."/>
        </authorList>
    </citation>
    <scope>NUCLEOTIDE SEQUENCE [MRNA]</scope>
    <scope>INDUCTION BY UV LIGHT</scope>
    <scope>GENE FAMILY</scope>
    <scope>NOMENCLATURE</scope>
    <source>
        <strain>cv. Columbia</strain>
    </source>
</reference>
<reference key="2">
    <citation type="journal article" date="2000" name="DNA Res.">
        <title>Structural analysis of Arabidopsis thaliana chromosome 5. X. Sequence features of the regions of 3,076,755 bp covered by sixty P1 and TAC clones.</title>
        <authorList>
            <person name="Sato S."/>
            <person name="Nakamura Y."/>
            <person name="Kaneko T."/>
            <person name="Katoh T."/>
            <person name="Asamizu E."/>
            <person name="Kotani H."/>
            <person name="Tabata S."/>
        </authorList>
    </citation>
    <scope>NUCLEOTIDE SEQUENCE [LARGE SCALE GENOMIC DNA]</scope>
    <source>
        <strain>cv. Columbia</strain>
    </source>
</reference>
<reference key="3">
    <citation type="journal article" date="2017" name="Plant J.">
        <title>Araport11: a complete reannotation of the Arabidopsis thaliana reference genome.</title>
        <authorList>
            <person name="Cheng C.Y."/>
            <person name="Krishnakumar V."/>
            <person name="Chan A.P."/>
            <person name="Thibaud-Nissen F."/>
            <person name="Schobel S."/>
            <person name="Town C.D."/>
        </authorList>
    </citation>
    <scope>GENOME REANNOTATION</scope>
    <source>
        <strain>cv. Columbia</strain>
    </source>
</reference>
<reference key="4">
    <citation type="journal article" date="2003" name="Plant Cell">
        <title>The Arabidopsis basic/helix-loop-helix transcription factor family.</title>
        <authorList>
            <person name="Toledo-Ortiz G."/>
            <person name="Huq E."/>
            <person name="Quail P.H."/>
        </authorList>
    </citation>
    <scope>GENE FAMILY</scope>
</reference>
<reference key="5">
    <citation type="journal article" date="2003" name="Plant Cell">
        <title>Update on the basic helix-loop-helix transcription factor gene family in Arabidopsis thaliana.</title>
        <authorList>
            <person name="Bailey P.C."/>
            <person name="Martin C."/>
            <person name="Toledo-Ortiz G."/>
            <person name="Quail P.H."/>
            <person name="Huq E."/>
            <person name="Heim M.A."/>
            <person name="Jakoby M."/>
            <person name="Werber M."/>
            <person name="Weisshaar B."/>
        </authorList>
    </citation>
    <scope>GENE FAMILY</scope>
    <scope>NOMENCLATURE</scope>
</reference>
<protein>
    <recommendedName>
        <fullName>Transcription factor bHLH28</fullName>
    </recommendedName>
    <alternativeName>
        <fullName>Basic helix-loop-helix protein 28</fullName>
        <shortName>AtbHLH28</shortName>
        <shortName>bHLH 28</shortName>
    </alternativeName>
    <alternativeName>
        <fullName>Transcription factor EN 40</fullName>
    </alternativeName>
    <alternativeName>
        <fullName>bHLH transcription factor bHLH028</fullName>
    </alternativeName>
</protein>
<keyword id="KW-0238">DNA-binding</keyword>
<keyword id="KW-0539">Nucleus</keyword>
<keyword id="KW-1185">Reference proteome</keyword>
<keyword id="KW-0804">Transcription</keyword>
<keyword id="KW-0805">Transcription regulation</keyword>
<dbReference type="EMBL" id="AF252636">
    <property type="protein sequence ID" value="AAL55721.1"/>
    <property type="molecule type" value="mRNA"/>
</dbReference>
<dbReference type="EMBL" id="AB022221">
    <property type="protein sequence ID" value="BAA97217.1"/>
    <property type="molecule type" value="Genomic_DNA"/>
</dbReference>
<dbReference type="EMBL" id="CP002688">
    <property type="protein sequence ID" value="AED95431.1"/>
    <property type="molecule type" value="Genomic_DNA"/>
</dbReference>
<dbReference type="RefSeq" id="NP_199495.1">
    <property type="nucleotide sequence ID" value="NM_124054.2"/>
</dbReference>
<dbReference type="SMR" id="Q9LUK7"/>
<dbReference type="BioGRID" id="19975">
    <property type="interactions" value="17"/>
</dbReference>
<dbReference type="STRING" id="3702.Q9LUK7"/>
<dbReference type="PaxDb" id="3702-AT5G46830.1"/>
<dbReference type="ProteomicsDB" id="240401"/>
<dbReference type="EnsemblPlants" id="AT5G46830.1">
    <property type="protein sequence ID" value="AT5G46830.1"/>
    <property type="gene ID" value="AT5G46830"/>
</dbReference>
<dbReference type="GeneID" id="834727"/>
<dbReference type="Gramene" id="AT5G46830.1">
    <property type="protein sequence ID" value="AT5G46830.1"/>
    <property type="gene ID" value="AT5G46830"/>
</dbReference>
<dbReference type="KEGG" id="ath:AT5G46830"/>
<dbReference type="Araport" id="AT5G46830"/>
<dbReference type="TAIR" id="AT5G46830">
    <property type="gene designation" value="NIG1"/>
</dbReference>
<dbReference type="eggNOG" id="ENOG502QUFW">
    <property type="taxonomic scope" value="Eukaryota"/>
</dbReference>
<dbReference type="HOGENOM" id="CLU_021132_0_1_1"/>
<dbReference type="InParanoid" id="Q9LUK7"/>
<dbReference type="OMA" id="VSMTWSF"/>
<dbReference type="PhylomeDB" id="Q9LUK7"/>
<dbReference type="PRO" id="PR:Q9LUK7"/>
<dbReference type="Proteomes" id="UP000006548">
    <property type="component" value="Chromosome 5"/>
</dbReference>
<dbReference type="ExpressionAtlas" id="Q9LUK7">
    <property type="expression patterns" value="baseline and differential"/>
</dbReference>
<dbReference type="GO" id="GO:0005634">
    <property type="term" value="C:nucleus"/>
    <property type="evidence" value="ECO:0000314"/>
    <property type="project" value="TAIR"/>
</dbReference>
<dbReference type="GO" id="GO:0005509">
    <property type="term" value="F:calcium ion binding"/>
    <property type="evidence" value="ECO:0000314"/>
    <property type="project" value="TAIR"/>
</dbReference>
<dbReference type="GO" id="GO:0003677">
    <property type="term" value="F:DNA binding"/>
    <property type="evidence" value="ECO:0000314"/>
    <property type="project" value="TAIR"/>
</dbReference>
<dbReference type="GO" id="GO:0003700">
    <property type="term" value="F:DNA-binding transcription factor activity"/>
    <property type="evidence" value="ECO:0000250"/>
    <property type="project" value="TAIR"/>
</dbReference>
<dbReference type="GO" id="GO:0046983">
    <property type="term" value="F:protein dimerization activity"/>
    <property type="evidence" value="ECO:0007669"/>
    <property type="project" value="InterPro"/>
</dbReference>
<dbReference type="GO" id="GO:0042538">
    <property type="term" value="P:hyperosmotic salinity response"/>
    <property type="evidence" value="ECO:0000315"/>
    <property type="project" value="TAIR"/>
</dbReference>
<dbReference type="GO" id="GO:0006355">
    <property type="term" value="P:regulation of DNA-templated transcription"/>
    <property type="evidence" value="ECO:0000304"/>
    <property type="project" value="TAIR"/>
</dbReference>
<dbReference type="GO" id="GO:0009651">
    <property type="term" value="P:response to salt stress"/>
    <property type="evidence" value="ECO:0000270"/>
    <property type="project" value="TAIR"/>
</dbReference>
<dbReference type="CDD" id="cd11449">
    <property type="entry name" value="bHLH_AtAIB_like"/>
    <property type="match status" value="1"/>
</dbReference>
<dbReference type="Gene3D" id="4.10.280.10">
    <property type="entry name" value="Helix-loop-helix DNA-binding domain"/>
    <property type="match status" value="1"/>
</dbReference>
<dbReference type="InterPro" id="IPR045084">
    <property type="entry name" value="AIB/MYC-like"/>
</dbReference>
<dbReference type="InterPro" id="IPR011598">
    <property type="entry name" value="bHLH_dom"/>
</dbReference>
<dbReference type="InterPro" id="IPR036638">
    <property type="entry name" value="HLH_DNA-bd_sf"/>
</dbReference>
<dbReference type="InterPro" id="IPR025610">
    <property type="entry name" value="MYC/MYB_N"/>
</dbReference>
<dbReference type="PANTHER" id="PTHR11514">
    <property type="entry name" value="MYC"/>
    <property type="match status" value="1"/>
</dbReference>
<dbReference type="PANTHER" id="PTHR11514:SF133">
    <property type="entry name" value="TRANSCRIPTION FACTOR BHLH28"/>
    <property type="match status" value="1"/>
</dbReference>
<dbReference type="Pfam" id="PF14215">
    <property type="entry name" value="bHLH-MYC_N"/>
    <property type="match status" value="1"/>
</dbReference>
<dbReference type="Pfam" id="PF00010">
    <property type="entry name" value="HLH"/>
    <property type="match status" value="1"/>
</dbReference>
<dbReference type="SMART" id="SM00353">
    <property type="entry name" value="HLH"/>
    <property type="match status" value="1"/>
</dbReference>
<dbReference type="SUPFAM" id="SSF47459">
    <property type="entry name" value="HLH, helix-loop-helix DNA-binding domain"/>
    <property type="match status" value="1"/>
</dbReference>
<dbReference type="PROSITE" id="PS50888">
    <property type="entry name" value="BHLH"/>
    <property type="match status" value="1"/>
</dbReference>
<proteinExistence type="evidence at transcript level"/>
<evidence type="ECO:0000255" key="1">
    <source>
        <dbReference type="PROSITE-ProRule" id="PRU00981"/>
    </source>
</evidence>
<evidence type="ECO:0000269" key="2">
    <source>
    </source>
</evidence>
<evidence type="ECO:0000305" key="3"/>
<organism>
    <name type="scientific">Arabidopsis thaliana</name>
    <name type="common">Mouse-ear cress</name>
    <dbReference type="NCBI Taxonomy" id="3702"/>
    <lineage>
        <taxon>Eukaryota</taxon>
        <taxon>Viridiplantae</taxon>
        <taxon>Streptophyta</taxon>
        <taxon>Embryophyta</taxon>
        <taxon>Tracheophyta</taxon>
        <taxon>Spermatophyta</taxon>
        <taxon>Magnoliopsida</taxon>
        <taxon>eudicotyledons</taxon>
        <taxon>Gunneridae</taxon>
        <taxon>Pentapetalae</taxon>
        <taxon>rosids</taxon>
        <taxon>malvids</taxon>
        <taxon>Brassicales</taxon>
        <taxon>Brassicaceae</taxon>
        <taxon>Camelineae</taxon>
        <taxon>Arabidopsis</taxon>
    </lineage>
</organism>
<comment type="subunit">
    <text evidence="3">Homodimer.</text>
</comment>
<comment type="subcellular location">
    <subcellularLocation>
        <location evidence="1">Nucleus</location>
    </subcellularLocation>
</comment>
<comment type="induction">
    <text evidence="2">By UV treatment.</text>
</comment>
<accession>Q9LUK7</accession>
<sequence length="511" mass="57348">MINTDDNLLMIEALLTSDPSPPLLPANLSLETTLPKRLHAVLNGTHEPWSYAIFWKPSYDDFSGEAVLKWGDGVYTGGNEEKTRGRLRRKKTILSSPEEKERRSNVIRELNLMISGEAFPVVEDDVSDDDDVEVTDMEWFFLVSMTWSFGNGSGLAGKAFASYNPVLVTGSDLIYGSGCDRAKQGGDVGLQTILCIPSHNGVLELASTEEIRPNSDLFNRIRFLFGGSKYFSGAPNSNSELFPFQLESSCSSTVTGNPNPSPVYLQNRYNLNFSTSSSTLARAPCGDVLSFGENVKQSFENRNPNTYSDQIQNVVPHATVMLEKKKGKKRGRKPAHGRDKPLNHVEAERMRREKLNHRFYALRAVVPNVSKMDKTSLLEDAVCYINELKSKAENVELEKHAIEIQFNELKEIAGQRNAIPSVCKYEEKASEMMKIEVKIMESDDAMVRVESRKDHHPGARLMNALMDLELEVNHASISVMNDLMIQQANVKMGLRIYKQEELRDLLMSKIS</sequence>